<keyword id="KW-0687">Ribonucleoprotein</keyword>
<keyword id="KW-0689">Ribosomal protein</keyword>
<keyword id="KW-0694">RNA-binding</keyword>
<keyword id="KW-0699">rRNA-binding</keyword>
<organism>
    <name type="scientific">Brucella abortus (strain S19)</name>
    <dbReference type="NCBI Taxonomy" id="430066"/>
    <lineage>
        <taxon>Bacteria</taxon>
        <taxon>Pseudomonadati</taxon>
        <taxon>Pseudomonadota</taxon>
        <taxon>Alphaproteobacteria</taxon>
        <taxon>Hyphomicrobiales</taxon>
        <taxon>Brucellaceae</taxon>
        <taxon>Brucella/Ochrobactrum group</taxon>
        <taxon>Brucella</taxon>
    </lineage>
</organism>
<evidence type="ECO:0000255" key="1">
    <source>
        <dbReference type="HAMAP-Rule" id="MF_00360"/>
    </source>
</evidence>
<evidence type="ECO:0000256" key="2">
    <source>
        <dbReference type="SAM" id="MobiDB-lite"/>
    </source>
</evidence>
<evidence type="ECO:0000305" key="3"/>
<proteinExistence type="inferred from homology"/>
<name>RS6_BRUA1</name>
<accession>B2S9V4</accession>
<feature type="chain" id="PRO_1000120715" description="Small ribosomal subunit protein bS6">
    <location>
        <begin position="1"/>
        <end position="148"/>
    </location>
</feature>
<feature type="region of interest" description="Disordered" evidence="2">
    <location>
        <begin position="96"/>
        <end position="148"/>
    </location>
</feature>
<comment type="function">
    <text evidence="1">Binds together with bS18 to 16S ribosomal RNA.</text>
</comment>
<comment type="similarity">
    <text evidence="1">Belongs to the bacterial ribosomal protein bS6 family.</text>
</comment>
<gene>
    <name evidence="1" type="primary">rpsF</name>
    <name type="ordered locus">BAbS19_I04450</name>
</gene>
<protein>
    <recommendedName>
        <fullName evidence="1">Small ribosomal subunit protein bS6</fullName>
    </recommendedName>
    <alternativeName>
        <fullName evidence="3">30S ribosomal protein S6</fullName>
    </alternativeName>
</protein>
<reference key="1">
    <citation type="journal article" date="2008" name="PLoS ONE">
        <title>Genome sequence of Brucella abortus vaccine strain S19 compared to virulent strains yields candidate virulence genes.</title>
        <authorList>
            <person name="Crasta O.R."/>
            <person name="Folkerts O."/>
            <person name="Fei Z."/>
            <person name="Mane S.P."/>
            <person name="Evans C."/>
            <person name="Martino-Catt S."/>
            <person name="Bricker B."/>
            <person name="Yu G."/>
            <person name="Du L."/>
            <person name="Sobral B.W."/>
        </authorList>
    </citation>
    <scope>NUCLEOTIDE SEQUENCE [LARGE SCALE GENOMIC DNA]</scope>
    <source>
        <strain>S19</strain>
    </source>
</reference>
<dbReference type="EMBL" id="CP000887">
    <property type="protein sequence ID" value="ACD71984.1"/>
    <property type="molecule type" value="Genomic_DNA"/>
</dbReference>
<dbReference type="RefSeq" id="WP_002963611.1">
    <property type="nucleotide sequence ID" value="NC_010742.1"/>
</dbReference>
<dbReference type="SMR" id="B2S9V4"/>
<dbReference type="GeneID" id="97534175"/>
<dbReference type="KEGG" id="bmc:BAbS19_I04450"/>
<dbReference type="HOGENOM" id="CLU_113441_2_0_5"/>
<dbReference type="Proteomes" id="UP000002565">
    <property type="component" value="Chromosome 1"/>
</dbReference>
<dbReference type="GO" id="GO:0022627">
    <property type="term" value="C:cytosolic small ribosomal subunit"/>
    <property type="evidence" value="ECO:0007669"/>
    <property type="project" value="TreeGrafter"/>
</dbReference>
<dbReference type="GO" id="GO:0070181">
    <property type="term" value="F:small ribosomal subunit rRNA binding"/>
    <property type="evidence" value="ECO:0007669"/>
    <property type="project" value="TreeGrafter"/>
</dbReference>
<dbReference type="GO" id="GO:0003735">
    <property type="term" value="F:structural constituent of ribosome"/>
    <property type="evidence" value="ECO:0007669"/>
    <property type="project" value="InterPro"/>
</dbReference>
<dbReference type="GO" id="GO:0006412">
    <property type="term" value="P:translation"/>
    <property type="evidence" value="ECO:0007669"/>
    <property type="project" value="UniProtKB-UniRule"/>
</dbReference>
<dbReference type="CDD" id="cd00473">
    <property type="entry name" value="bS6"/>
    <property type="match status" value="1"/>
</dbReference>
<dbReference type="Gene3D" id="3.30.70.60">
    <property type="match status" value="1"/>
</dbReference>
<dbReference type="HAMAP" id="MF_00360">
    <property type="entry name" value="Ribosomal_bS6"/>
    <property type="match status" value="1"/>
</dbReference>
<dbReference type="InterPro" id="IPR000529">
    <property type="entry name" value="Ribosomal_bS6"/>
</dbReference>
<dbReference type="InterPro" id="IPR035980">
    <property type="entry name" value="Ribosomal_bS6_sf"/>
</dbReference>
<dbReference type="InterPro" id="IPR020814">
    <property type="entry name" value="Ribosomal_S6_plastid/chlpt"/>
</dbReference>
<dbReference type="InterPro" id="IPR014717">
    <property type="entry name" value="Transl_elong_EF1B/ribsomal_bS6"/>
</dbReference>
<dbReference type="NCBIfam" id="TIGR00166">
    <property type="entry name" value="S6"/>
    <property type="match status" value="1"/>
</dbReference>
<dbReference type="PANTHER" id="PTHR21011">
    <property type="entry name" value="MITOCHONDRIAL 28S RIBOSOMAL PROTEIN S6"/>
    <property type="match status" value="1"/>
</dbReference>
<dbReference type="PANTHER" id="PTHR21011:SF1">
    <property type="entry name" value="SMALL RIBOSOMAL SUBUNIT PROTEIN BS6M"/>
    <property type="match status" value="1"/>
</dbReference>
<dbReference type="Pfam" id="PF01250">
    <property type="entry name" value="Ribosomal_S6"/>
    <property type="match status" value="1"/>
</dbReference>
<dbReference type="SUPFAM" id="SSF54995">
    <property type="entry name" value="Ribosomal protein S6"/>
    <property type="match status" value="1"/>
</dbReference>
<sequence>MALYEHVLLARQDISQQQVDALVEQFKGVLEANGGKFGKVENWGLRPLTYRIKKNRKAYYTLVNIDAPAAAVAEMERQMRINEDVLRFLTVRVEEHEEGQSAMLTRRDDRRERDGDDRPRRREGGFDRGDRGDRGPRRPRDNEAGEGA</sequence>